<proteinExistence type="evidence at protein level"/>
<feature type="chain" id="PRO_0000183910" description="Cytochrome bo(3) ubiquinol oxidase subunit 4">
    <location>
        <begin position="1"/>
        <end position="109"/>
    </location>
</feature>
<feature type="topological domain" description="Cytoplasmic" evidence="5">
    <location>
        <begin position="1"/>
        <end position="17"/>
    </location>
</feature>
<feature type="transmembrane region" description="Helical" evidence="5">
    <location>
        <begin position="18"/>
        <end position="36"/>
    </location>
</feature>
<feature type="topological domain" description="Periplasmic" evidence="5">
    <location>
        <begin position="37"/>
        <end position="45"/>
    </location>
</feature>
<feature type="transmembrane region" description="Helical" evidence="5">
    <location>
        <begin position="46"/>
        <end position="64"/>
    </location>
</feature>
<feature type="topological domain" description="Cytoplasmic" evidence="5">
    <location>
        <begin position="65"/>
        <end position="80"/>
    </location>
</feature>
<feature type="transmembrane region" description="Helical" evidence="5">
    <location>
        <begin position="81"/>
        <end position="99"/>
    </location>
</feature>
<feature type="topological domain" description="Periplasmic" evidence="5">
    <location>
        <begin position="100"/>
        <end position="109"/>
    </location>
</feature>
<feature type="helix" evidence="6">
    <location>
        <begin position="15"/>
        <end position="38"/>
    </location>
</feature>
<feature type="helix" evidence="6">
    <location>
        <begin position="43"/>
        <end position="64"/>
    </location>
</feature>
<feature type="helix" evidence="6">
    <location>
        <begin position="72"/>
        <end position="75"/>
    </location>
</feature>
<feature type="helix" evidence="6">
    <location>
        <begin position="76"/>
        <end position="105"/>
    </location>
</feature>
<sequence length="109" mass="12029">MSHSTDHSGASHGSVKTYMTGFILSIILTVIPFWMVMTGAASPAVILGTILAMAVVQVLVHLVCFLHMNTKSDEGWNMTAFVFTVLIIAILVVGSIWIMWNLNYNMMMH</sequence>
<gene>
    <name type="primary">cyoD</name>
    <name type="ordered locus">b0429</name>
    <name type="ordered locus">JW0419</name>
</gene>
<accession>P0ABJ6</accession>
<accession>P18403</accession>
<accession>P77116</accession>
<accession>Q2MBZ7</accession>
<organism>
    <name type="scientific">Escherichia coli (strain K12)</name>
    <dbReference type="NCBI Taxonomy" id="83333"/>
    <lineage>
        <taxon>Bacteria</taxon>
        <taxon>Pseudomonadati</taxon>
        <taxon>Pseudomonadota</taxon>
        <taxon>Gammaproteobacteria</taxon>
        <taxon>Enterobacterales</taxon>
        <taxon>Enterobacteriaceae</taxon>
        <taxon>Escherichia</taxon>
    </lineage>
</organism>
<protein>
    <recommendedName>
        <fullName>Cytochrome bo(3) ubiquinol oxidase subunit 4</fullName>
    </recommendedName>
    <alternativeName>
        <fullName>Cytochrome o ubiquinol oxidase subunit 4</fullName>
        <shortName>Cytochrome o subunit 4</shortName>
    </alternativeName>
    <alternativeName>
        <fullName>Oxidase bo(3) subunit 4</fullName>
    </alternativeName>
    <alternativeName>
        <fullName>Ubiquinol oxidase chain D</fullName>
    </alternativeName>
    <alternativeName>
        <fullName>Ubiquinol oxidase polypeptide IV</fullName>
    </alternativeName>
    <alternativeName>
        <fullName>Ubiquinol oxidase subunit 4</fullName>
    </alternativeName>
</protein>
<dbReference type="EMBL" id="J05492">
    <property type="protein sequence ID" value="AAA23634.1"/>
    <property type="molecule type" value="Genomic_DNA"/>
</dbReference>
<dbReference type="EMBL" id="U82664">
    <property type="protein sequence ID" value="AAB40185.1"/>
    <property type="status" value="ALT_INIT"/>
    <property type="molecule type" value="Genomic_DNA"/>
</dbReference>
<dbReference type="EMBL" id="U00096">
    <property type="protein sequence ID" value="AAC73532.1"/>
    <property type="molecule type" value="Genomic_DNA"/>
</dbReference>
<dbReference type="EMBL" id="AP009048">
    <property type="protein sequence ID" value="BAE76209.1"/>
    <property type="molecule type" value="Genomic_DNA"/>
</dbReference>
<dbReference type="PIR" id="D42226">
    <property type="entry name" value="D42226"/>
</dbReference>
<dbReference type="RefSeq" id="NP_414963.1">
    <property type="nucleotide sequence ID" value="NC_000913.3"/>
</dbReference>
<dbReference type="RefSeq" id="WP_000019869.1">
    <property type="nucleotide sequence ID" value="NZ_STEB01000007.1"/>
</dbReference>
<dbReference type="PDB" id="1FFT">
    <property type="method" value="X-ray"/>
    <property type="resolution" value="3.50 A"/>
</dbReference>
<dbReference type="PDB" id="6WTI">
    <property type="method" value="EM"/>
    <property type="resolution" value="2.38 A"/>
    <property type="chains" value="D=1-109"/>
</dbReference>
<dbReference type="PDB" id="7CUB">
    <property type="method" value="EM"/>
    <property type="resolution" value="2.55 A"/>
    <property type="chains" value="D=1-109"/>
</dbReference>
<dbReference type="PDB" id="7CUQ">
    <property type="method" value="EM"/>
    <property type="resolution" value="2.64 A"/>
    <property type="chains" value="D=1-109"/>
</dbReference>
<dbReference type="PDB" id="7CUW">
    <property type="method" value="EM"/>
    <property type="resolution" value="2.63 A"/>
    <property type="chains" value="D=1-109"/>
</dbReference>
<dbReference type="PDB" id="7N9Z">
    <property type="method" value="EM"/>
    <property type="resolution" value="2.19 A"/>
    <property type="chains" value="I=1-109"/>
</dbReference>
<dbReference type="PDB" id="7XMC">
    <property type="method" value="EM"/>
    <property type="resolution" value="3.09 A"/>
    <property type="chains" value="D=1-109"/>
</dbReference>
<dbReference type="PDB" id="7XMD">
    <property type="method" value="EM"/>
    <property type="resolution" value="2.99 A"/>
    <property type="chains" value="D=1-109"/>
</dbReference>
<dbReference type="PDB" id="8F68">
    <property type="method" value="EM"/>
    <property type="resolution" value="3.15 A"/>
    <property type="chains" value="D=13-108"/>
</dbReference>
<dbReference type="PDB" id="8F6C">
    <property type="method" value="EM"/>
    <property type="resolution" value="3.46 A"/>
    <property type="chains" value="D/H=14-109"/>
</dbReference>
<dbReference type="PDB" id="8GO3">
    <property type="method" value="EM"/>
    <property type="resolution" value="3.09 A"/>
    <property type="chains" value="D=1-109"/>
</dbReference>
<dbReference type="PDB" id="8QQK">
    <property type="method" value="EM"/>
    <property type="resolution" value="2.80 A"/>
    <property type="chains" value="D=1-109"/>
</dbReference>
<dbReference type="PDBsum" id="1FFT"/>
<dbReference type="PDBsum" id="6WTI"/>
<dbReference type="PDBsum" id="7CUB"/>
<dbReference type="PDBsum" id="7CUQ"/>
<dbReference type="PDBsum" id="7CUW"/>
<dbReference type="PDBsum" id="7N9Z"/>
<dbReference type="PDBsum" id="7XMC"/>
<dbReference type="PDBsum" id="7XMD"/>
<dbReference type="PDBsum" id="8F68"/>
<dbReference type="PDBsum" id="8F6C"/>
<dbReference type="PDBsum" id="8GO3"/>
<dbReference type="PDBsum" id="8QQK"/>
<dbReference type="EMDB" id="EMD-18594"/>
<dbReference type="EMDB" id="EMD-28877"/>
<dbReference type="EMDB" id="EMD-28879"/>
<dbReference type="EMDB" id="EMD-30471"/>
<dbReference type="EMDB" id="EMD-30474"/>
<dbReference type="EMDB" id="EMD-30475"/>
<dbReference type="EMDB" id="EMD-33293"/>
<dbReference type="EMDB" id="EMD-33294"/>
<dbReference type="SMR" id="P0ABJ6"/>
<dbReference type="BioGRID" id="4260871">
    <property type="interactions" value="223"/>
</dbReference>
<dbReference type="ComplexPortal" id="CPX-2102">
    <property type="entry name" value="Cytochrome bo3 ubiquinol oxidase complex"/>
</dbReference>
<dbReference type="DIP" id="DIP-48238N"/>
<dbReference type="FunCoup" id="P0ABJ6">
    <property type="interactions" value="103"/>
</dbReference>
<dbReference type="IntAct" id="P0ABJ6">
    <property type="interactions" value="1"/>
</dbReference>
<dbReference type="STRING" id="511145.b0429"/>
<dbReference type="TCDB" id="3.D.4.5.1">
    <property type="family name" value="the proton-translocating cytochrome oxidase (cox) superfamily"/>
</dbReference>
<dbReference type="PaxDb" id="511145-b0429"/>
<dbReference type="EnsemblBacteria" id="AAC73532">
    <property type="protein sequence ID" value="AAC73532"/>
    <property type="gene ID" value="b0429"/>
</dbReference>
<dbReference type="GeneID" id="944918"/>
<dbReference type="KEGG" id="ecj:JW0419"/>
<dbReference type="KEGG" id="eco:b0429"/>
<dbReference type="KEGG" id="ecoc:C3026_02095"/>
<dbReference type="PATRIC" id="fig|1411691.4.peg.1848"/>
<dbReference type="EchoBASE" id="EB0178"/>
<dbReference type="eggNOG" id="COG3125">
    <property type="taxonomic scope" value="Bacteria"/>
</dbReference>
<dbReference type="HOGENOM" id="CLU_140945_1_0_6"/>
<dbReference type="InParanoid" id="P0ABJ6"/>
<dbReference type="OMA" id="IVVHMVF"/>
<dbReference type="OrthoDB" id="2375888at2"/>
<dbReference type="PhylomeDB" id="P0ABJ6"/>
<dbReference type="BioCyc" id="EcoCyc:CYOD-MONOMER"/>
<dbReference type="BioCyc" id="MetaCyc:CYOD-MONOMER"/>
<dbReference type="BRENDA" id="7.1.1.3">
    <property type="organism ID" value="2026"/>
</dbReference>
<dbReference type="PRO" id="PR:P0ABJ6"/>
<dbReference type="Proteomes" id="UP000000625">
    <property type="component" value="Chromosome"/>
</dbReference>
<dbReference type="GO" id="GO:0009319">
    <property type="term" value="C:cytochrome o ubiquinol oxidase complex"/>
    <property type="evidence" value="ECO:0000314"/>
    <property type="project" value="EcoCyc"/>
</dbReference>
<dbReference type="GO" id="GO:0005886">
    <property type="term" value="C:plasma membrane"/>
    <property type="evidence" value="ECO:0000314"/>
    <property type="project" value="ComplexPortal"/>
</dbReference>
<dbReference type="GO" id="GO:0009486">
    <property type="term" value="F:cytochrome bo3 ubiquinol oxidase activity"/>
    <property type="evidence" value="ECO:0000314"/>
    <property type="project" value="EcoCyc"/>
</dbReference>
<dbReference type="GO" id="GO:0009055">
    <property type="term" value="F:electron transfer activity"/>
    <property type="evidence" value="ECO:0000314"/>
    <property type="project" value="EcoCyc"/>
</dbReference>
<dbReference type="GO" id="GO:0015453">
    <property type="term" value="F:oxidoreduction-driven active transmembrane transporter activity"/>
    <property type="evidence" value="ECO:0000314"/>
    <property type="project" value="EcoCyc"/>
</dbReference>
<dbReference type="GO" id="GO:0015078">
    <property type="term" value="F:proton transmembrane transporter activity"/>
    <property type="evidence" value="ECO:0000314"/>
    <property type="project" value="EcoCyc"/>
</dbReference>
<dbReference type="GO" id="GO:0019646">
    <property type="term" value="P:aerobic electron transport chain"/>
    <property type="evidence" value="ECO:0000314"/>
    <property type="project" value="ComplexPortal"/>
</dbReference>
<dbReference type="GO" id="GO:0009060">
    <property type="term" value="P:aerobic respiration"/>
    <property type="evidence" value="ECO:0000315"/>
    <property type="project" value="EcoCyc"/>
</dbReference>
<dbReference type="GO" id="GO:0015990">
    <property type="term" value="P:electron transport coupled proton transport"/>
    <property type="evidence" value="ECO:0000314"/>
    <property type="project" value="ComplexPortal"/>
</dbReference>
<dbReference type="InterPro" id="IPR005171">
    <property type="entry name" value="Cyt_c_oxidase_su4_prok"/>
</dbReference>
<dbReference type="InterPro" id="IPR014210">
    <property type="entry name" value="Cyt_o_ubiqinol_oxidase_su4"/>
</dbReference>
<dbReference type="InterPro" id="IPR050968">
    <property type="entry name" value="Cytochrome_c_oxidase_bac_sub4"/>
</dbReference>
<dbReference type="NCBIfam" id="TIGR02847">
    <property type="entry name" value="CyoD"/>
    <property type="match status" value="1"/>
</dbReference>
<dbReference type="NCBIfam" id="NF007878">
    <property type="entry name" value="PRK10582.1"/>
    <property type="match status" value="1"/>
</dbReference>
<dbReference type="PANTHER" id="PTHR36835">
    <property type="entry name" value="CYTOCHROME BO(3) UBIQUINOL OXIDASE SUBUNIT 4"/>
    <property type="match status" value="1"/>
</dbReference>
<dbReference type="PANTHER" id="PTHR36835:SF1">
    <property type="entry name" value="CYTOCHROME BO(3) UBIQUINOL OXIDASE SUBUNIT 4"/>
    <property type="match status" value="1"/>
</dbReference>
<dbReference type="Pfam" id="PF03626">
    <property type="entry name" value="COX4_pro"/>
    <property type="match status" value="1"/>
</dbReference>
<reference key="1">
    <citation type="journal article" date="1990" name="J. Biol. Chem.">
        <title>The sequence of the cyo operon indicates substantial structural similarities between the cytochrome o ubiquinol oxidase of Escherichia coli and the aa3-type family of cytochrome c oxidases.</title>
        <authorList>
            <person name="Chepuri V."/>
            <person name="Lemieux L."/>
            <person name="Au D.C.T."/>
            <person name="Gennis R.B."/>
        </authorList>
    </citation>
    <scope>NUCLEOTIDE SEQUENCE [GENOMIC DNA]</scope>
</reference>
<reference key="2">
    <citation type="submission" date="1997-01" db="EMBL/GenBank/DDBJ databases">
        <title>Sequence of minutes 4-25 of Escherichia coli.</title>
        <authorList>
            <person name="Chung E."/>
            <person name="Allen E."/>
            <person name="Araujo R."/>
            <person name="Aparicio A.M."/>
            <person name="Davis K."/>
            <person name="Duncan M."/>
            <person name="Federspiel N."/>
            <person name="Hyman R."/>
            <person name="Kalman S."/>
            <person name="Komp C."/>
            <person name="Kurdi O."/>
            <person name="Lew H."/>
            <person name="Lin D."/>
            <person name="Namath A."/>
            <person name="Oefner P."/>
            <person name="Roberts D."/>
            <person name="Schramm S."/>
            <person name="Davis R.W."/>
        </authorList>
    </citation>
    <scope>NUCLEOTIDE SEQUENCE [LARGE SCALE GENOMIC DNA]</scope>
    <source>
        <strain>K12 / MG1655 / ATCC 47076</strain>
    </source>
</reference>
<reference key="3">
    <citation type="journal article" date="1997" name="Science">
        <title>The complete genome sequence of Escherichia coli K-12.</title>
        <authorList>
            <person name="Blattner F.R."/>
            <person name="Plunkett G. III"/>
            <person name="Bloch C.A."/>
            <person name="Perna N.T."/>
            <person name="Burland V."/>
            <person name="Riley M."/>
            <person name="Collado-Vides J."/>
            <person name="Glasner J.D."/>
            <person name="Rode C.K."/>
            <person name="Mayhew G.F."/>
            <person name="Gregor J."/>
            <person name="Davis N.W."/>
            <person name="Kirkpatrick H.A."/>
            <person name="Goeden M.A."/>
            <person name="Rose D.J."/>
            <person name="Mau B."/>
            <person name="Shao Y."/>
        </authorList>
    </citation>
    <scope>NUCLEOTIDE SEQUENCE [LARGE SCALE GENOMIC DNA]</scope>
    <source>
        <strain>K12 / MG1655 / ATCC 47076</strain>
    </source>
</reference>
<reference key="4">
    <citation type="journal article" date="2006" name="Mol. Syst. Biol.">
        <title>Highly accurate genome sequences of Escherichia coli K-12 strains MG1655 and W3110.</title>
        <authorList>
            <person name="Hayashi K."/>
            <person name="Morooka N."/>
            <person name="Yamamoto Y."/>
            <person name="Fujita K."/>
            <person name="Isono K."/>
            <person name="Choi S."/>
            <person name="Ohtsubo E."/>
            <person name="Baba T."/>
            <person name="Wanner B.L."/>
            <person name="Mori H."/>
            <person name="Horiuchi T."/>
        </authorList>
    </citation>
    <scope>NUCLEOTIDE SEQUENCE [LARGE SCALE GENOMIC DNA]</scope>
    <source>
        <strain>K12 / W3110 / ATCC 27325 / DSM 5911</strain>
    </source>
</reference>
<reference key="5">
    <citation type="journal article" date="1983" name="Proc. Natl. Acad. Sci. U.S.A.">
        <title>Reconstitution of active transport in proteoliposomes containing cytochrome o oxidase and lac carrier protein purified from Escherichia coli.</title>
        <authorList>
            <person name="Matsushita K."/>
            <person name="Patel L."/>
            <person name="Gennis R.B."/>
            <person name="Kaback H.R."/>
        </authorList>
    </citation>
    <scope>FUNCTION IN UBIQUINOL OXIDATION</scope>
    <scope>FUNCTION IN PROTON ELECTROCHEMICAL GRADIENT GENERATION</scope>
    <scope>SUBUNIT</scope>
</reference>
<reference key="6">
    <citation type="journal article" date="1990" name="J. Biol. Chem.">
        <title>The use of gene fusions to determine the topology of all of the subunits of the cytochrome o terminal oxidase complex of Escherichia coli.</title>
        <authorList>
            <person name="Chepuri V."/>
            <person name="Gennis R.B."/>
        </authorList>
    </citation>
    <scope>TOPOLOGY</scope>
</reference>
<reference key="7">
    <citation type="journal article" date="2005" name="Science">
        <title>Global topology analysis of the Escherichia coli inner membrane proteome.</title>
        <authorList>
            <person name="Daley D.O."/>
            <person name="Rapp M."/>
            <person name="Granseth E."/>
            <person name="Melen K."/>
            <person name="Drew D."/>
            <person name="von Heijne G."/>
        </authorList>
    </citation>
    <scope>TOPOLOGY [LARGE SCALE ANALYSIS]</scope>
    <source>
        <strain>K12 / MG1655 / ATCC 47076</strain>
    </source>
</reference>
<reference key="8">
    <citation type="journal article" date="2009" name="J. Bacteriol.">
        <title>Respiration of Escherichia coli can be fully uncoupled via the nonelectrogenic terminal cytochrome bd-II oxidase.</title>
        <authorList>
            <person name="Bekker M."/>
            <person name="de Vries S."/>
            <person name="Ter Beek A."/>
            <person name="Hellingwerf K.J."/>
            <person name="de Mattos M.J."/>
        </authorList>
    </citation>
    <scope>FUNCTION AS AN OXIDASE</scope>
    <scope>FUNCTION AS A PROTON PUMP</scope>
    <scope>DISRUPTION PHENOTYPE</scope>
    <source>
        <strain>K12</strain>
    </source>
</reference>
<reference key="9">
    <citation type="journal article" date="2012" name="Appl. Environ. Microbiol.">
        <title>Uncoupling of substrate-level phosphorylation in Escherichia coli during glucose-limited growth.</title>
        <authorList>
            <person name="Sharma P."/>
            <person name="Hellingwerf K.J."/>
            <person name="de Mattos M.J."/>
            <person name="Bekker M."/>
        </authorList>
    </citation>
    <scope>FUNCTION AS AN OXIDASE</scope>
    <scope>FUNCTION IN PROTON TRANSLOCATION</scope>
    <scope>DISRUPTION PHENOTYPE</scope>
    <source>
        <strain>K12</strain>
    </source>
</reference>
<reference key="10">
    <citation type="journal article" date="2000" name="Nat. Struct. Biol.">
        <title>The structure of the ubiquinol oxidase from Escherichia coli and its ubiquinone binding site.</title>
        <authorList>
            <person name="Abramson J."/>
            <person name="Riistama S."/>
            <person name="Larsson G."/>
            <person name="Jasaitis A."/>
            <person name="Svensson-Ek M."/>
            <person name="Puustinen A."/>
            <person name="Iwata S."/>
            <person name="Wikstrom M."/>
        </authorList>
    </citation>
    <scope>X-RAY CRYSTALLOGRAPHY (3.5 ANGSTROMS)</scope>
    <scope>SUBUNIT</scope>
</reference>
<evidence type="ECO:0000269" key="1">
    <source>
    </source>
</evidence>
<evidence type="ECO:0000269" key="2">
    <source>
    </source>
</evidence>
<evidence type="ECO:0000269" key="3">
    <source>
    </source>
</evidence>
<evidence type="ECO:0000269" key="4">
    <source>
    </source>
</evidence>
<evidence type="ECO:0000305" key="5"/>
<evidence type="ECO:0007829" key="6">
    <source>
        <dbReference type="PDB" id="7N9Z"/>
    </source>
</evidence>
<keyword id="KW-0002">3D-structure</keyword>
<keyword id="KW-0997">Cell inner membrane</keyword>
<keyword id="KW-1003">Cell membrane</keyword>
<keyword id="KW-0249">Electron transport</keyword>
<keyword id="KW-0472">Membrane</keyword>
<keyword id="KW-0560">Oxidoreductase</keyword>
<keyword id="KW-1185">Reference proteome</keyword>
<keyword id="KW-0812">Transmembrane</keyword>
<keyword id="KW-1133">Transmembrane helix</keyword>
<keyword id="KW-0813">Transport</keyword>
<comment type="function">
    <text evidence="2 3 4">Cytochrome bo(3) ubiquinol terminal oxidase is the component of the aerobic respiratory chain of E.coli that predominates when cells are grown at high aeration. Has proton pump activity across the membrane in addition to electron transfer, pumping 2 protons/electron.</text>
</comment>
<comment type="subunit">
    <text evidence="1 4">Heterooctamer of two A chains, two B chains, two C chains and two D chains.</text>
</comment>
<comment type="subcellular location">
    <subcellularLocation>
        <location>Cell inner membrane</location>
        <topology>Multi-pass membrane protein</topology>
    </subcellularLocation>
</comment>
<comment type="disruption phenotype">
    <text evidence="2 3">Increased reduction of the ubiquinone pool (in aerobically grown minimal medium with glucose).</text>
</comment>
<comment type="similarity">
    <text evidence="5">Belongs to the cytochrome c oxidase bacterial subunit 4 family.</text>
</comment>
<comment type="sequence caution" evidence="5">
    <conflict type="erroneous initiation">
        <sequence resource="EMBL-CDS" id="AAB40185"/>
    </conflict>
    <text>Extended N-terminus.</text>
</comment>
<name>CYOD_ECOLI</name>